<sequence length="148" mass="16815">MAPGLRGLPRRGLWLLLAHHLFMVTACRDPDYGTLIQELCLSRFKEDMETIGKTLWCDWGKTIGSYGELTHCTKLVANKIGCFWPNPEVDKFFIAVHHRYFSKCPVSGRALRDPPNSILCPFIVLPITVTLLMTALVVWRSKRTEGIV</sequence>
<reference key="1">
    <citation type="journal article" date="2001" name="Cardiovasc. Res.">
        <title>Cardiac fibroblasts are major production and target cells of adrenomedullin in the heart in vitro.</title>
        <authorList>
            <person name="Tomoda Y."/>
            <person name="Kikumoto K."/>
            <person name="Isumi Y."/>
            <person name="Katafuchi T."/>
            <person name="Tanaka A."/>
            <person name="Kangawa K."/>
            <person name="Dohi K."/>
            <person name="Minamino N."/>
        </authorList>
    </citation>
    <scope>NUCLEOTIDE SEQUENCE [MRNA]</scope>
    <source>
        <strain>Sprague-Dawley</strain>
        <tissue>Brain</tissue>
    </source>
</reference>
<reference key="2">
    <citation type="journal article" date="2001" name="Eur. J. Neurosci.">
        <title>Cloning, characterization and central nervous system distribution of receptor activity modifying proteins in the rat.</title>
        <authorList>
            <person name="Oliver K.R."/>
            <person name="Kane S.A."/>
            <person name="Salvatore C.A."/>
            <person name="Mallee J.J."/>
            <person name="Kinsey A.M."/>
            <person name="Koblan K.S."/>
            <person name="Keyvan-Fouladi N."/>
            <person name="Heavens R.P."/>
            <person name="Wainwright A."/>
            <person name="Jacobson M."/>
            <person name="Dickerson I.M."/>
            <person name="Hill R.G."/>
        </authorList>
    </citation>
    <scope>NUCLEOTIDE SEQUENCE [MRNA]</scope>
    <scope>FUNCTION</scope>
    <source>
        <strain>Sprague-Dawley</strain>
        <tissue>Heart</tissue>
    </source>
</reference>
<feature type="signal peptide" evidence="2">
    <location>
        <begin position="1"/>
        <end position="26"/>
    </location>
</feature>
<feature type="chain" id="PRO_0000030170" description="Receptor activity-modifying protein 1">
    <location>
        <begin position="27"/>
        <end position="148"/>
    </location>
</feature>
<feature type="topological domain" description="Extracellular" evidence="2">
    <location>
        <begin position="27"/>
        <end position="118"/>
    </location>
</feature>
<feature type="transmembrane region" description="Helical" evidence="1">
    <location>
        <begin position="119"/>
        <end position="140"/>
    </location>
</feature>
<feature type="topological domain" description="Cytoplasmic" evidence="2">
    <location>
        <begin position="141"/>
        <end position="148"/>
    </location>
</feature>
<feature type="disulfide bond">
    <location>
        <begin position="27"/>
        <end position="82"/>
    </location>
</feature>
<feature type="disulfide bond" evidence="1">
    <location>
        <begin position="40"/>
        <end position="72"/>
    </location>
</feature>
<feature type="disulfide bond" evidence="1">
    <location>
        <begin position="57"/>
        <end position="104"/>
    </location>
</feature>
<evidence type="ECO:0000250" key="1">
    <source>
        <dbReference type="UniProtKB" id="O60894"/>
    </source>
</evidence>
<evidence type="ECO:0000255" key="2"/>
<evidence type="ECO:0000269" key="3">
    <source>
    </source>
</evidence>
<evidence type="ECO:0000305" key="4"/>
<evidence type="ECO:0000312" key="5">
    <source>
        <dbReference type="RGD" id="61870"/>
    </source>
</evidence>
<name>RAMP1_RAT</name>
<protein>
    <recommendedName>
        <fullName>Receptor activity-modifying protein 1</fullName>
    </recommendedName>
</protein>
<dbReference type="EMBL" id="AB042887">
    <property type="protein sequence ID" value="BAB03504.1"/>
    <property type="molecule type" value="mRNA"/>
</dbReference>
<dbReference type="EMBL" id="AF181550">
    <property type="protein sequence ID" value="AAG09434.1"/>
    <property type="molecule type" value="mRNA"/>
</dbReference>
<dbReference type="PIR" id="JC7235">
    <property type="entry name" value="JC7235"/>
</dbReference>
<dbReference type="RefSeq" id="NP_113833.1">
    <property type="nucleotide sequence ID" value="NM_031645.1"/>
</dbReference>
<dbReference type="SMR" id="Q9JJ74"/>
<dbReference type="BioGRID" id="248698">
    <property type="interactions" value="3"/>
</dbReference>
<dbReference type="ComplexPortal" id="CPX-246">
    <property type="entry name" value="Amylin receptor 1 complex"/>
</dbReference>
<dbReference type="ComplexPortal" id="CPX-248">
    <property type="entry name" value="CGRP receptor complex"/>
</dbReference>
<dbReference type="FunCoup" id="Q9JJ74">
    <property type="interactions" value="565"/>
</dbReference>
<dbReference type="STRING" id="10116.ENSRNOP00000027012"/>
<dbReference type="ChEMBL" id="CHEMBL2109240"/>
<dbReference type="GuidetoPHARMACOLOGY" id="51"/>
<dbReference type="PhosphoSitePlus" id="Q9JJ74"/>
<dbReference type="PaxDb" id="10116-ENSRNOP00000027012"/>
<dbReference type="GeneID" id="58965"/>
<dbReference type="KEGG" id="rno:58965"/>
<dbReference type="UCSC" id="RGD:61870">
    <property type="organism name" value="rat"/>
</dbReference>
<dbReference type="AGR" id="RGD:61870"/>
<dbReference type="CTD" id="10267"/>
<dbReference type="RGD" id="61870">
    <property type="gene designation" value="Ramp1"/>
</dbReference>
<dbReference type="VEuPathDB" id="HostDB:ENSRNOG00000019926"/>
<dbReference type="eggNOG" id="ENOG502S0TC">
    <property type="taxonomic scope" value="Eukaryota"/>
</dbReference>
<dbReference type="HOGENOM" id="CLU_116349_3_0_1"/>
<dbReference type="InParanoid" id="Q9JJ74"/>
<dbReference type="OrthoDB" id="71886at9989"/>
<dbReference type="PhylomeDB" id="Q9JJ74"/>
<dbReference type="TreeFam" id="TF333286"/>
<dbReference type="Reactome" id="R-RNO-419812">
    <property type="pathway name" value="Calcitonin-like ligand receptors"/>
</dbReference>
<dbReference type="PRO" id="PR:Q9JJ74"/>
<dbReference type="Proteomes" id="UP000002494">
    <property type="component" value="Chromosome 9"/>
</dbReference>
<dbReference type="Bgee" id="ENSRNOG00000019926">
    <property type="expression patterns" value="Expressed in thymus and 20 other cell types or tissues"/>
</dbReference>
<dbReference type="GO" id="GO:0009986">
    <property type="term" value="C:cell surface"/>
    <property type="evidence" value="ECO:0000266"/>
    <property type="project" value="RGD"/>
</dbReference>
<dbReference type="GO" id="GO:1990406">
    <property type="term" value="C:CGRP receptor complex"/>
    <property type="evidence" value="ECO:0000266"/>
    <property type="project" value="RGD"/>
</dbReference>
<dbReference type="GO" id="GO:0005615">
    <property type="term" value="C:extracellular space"/>
    <property type="evidence" value="ECO:0000314"/>
    <property type="project" value="RGD"/>
</dbReference>
<dbReference type="GO" id="GO:0098978">
    <property type="term" value="C:glutamatergic synapse"/>
    <property type="evidence" value="ECO:0000314"/>
    <property type="project" value="SynGO"/>
</dbReference>
<dbReference type="GO" id="GO:0005886">
    <property type="term" value="C:plasma membrane"/>
    <property type="evidence" value="ECO:0000266"/>
    <property type="project" value="RGD"/>
</dbReference>
<dbReference type="GO" id="GO:0043235">
    <property type="term" value="C:receptor complex"/>
    <property type="evidence" value="ECO:0000266"/>
    <property type="project" value="RGD"/>
</dbReference>
<dbReference type="GO" id="GO:0097060">
    <property type="term" value="C:synaptic membrane"/>
    <property type="evidence" value="ECO:0000314"/>
    <property type="project" value="SynGO"/>
</dbReference>
<dbReference type="GO" id="GO:0097643">
    <property type="term" value="F:amylin receptor activity"/>
    <property type="evidence" value="ECO:0000266"/>
    <property type="project" value="RGD"/>
</dbReference>
<dbReference type="GO" id="GO:1990407">
    <property type="term" value="F:calcitonin gene-related peptide binding"/>
    <property type="evidence" value="ECO:0000266"/>
    <property type="project" value="RGD"/>
</dbReference>
<dbReference type="GO" id="GO:0001635">
    <property type="term" value="F:calcitonin gene-related peptide receptor activity"/>
    <property type="evidence" value="ECO:0000266"/>
    <property type="project" value="RGD"/>
</dbReference>
<dbReference type="GO" id="GO:0015026">
    <property type="term" value="F:coreceptor activity"/>
    <property type="evidence" value="ECO:0000314"/>
    <property type="project" value="RGD"/>
</dbReference>
<dbReference type="GO" id="GO:0001664">
    <property type="term" value="F:G protein-coupled receptor binding"/>
    <property type="evidence" value="ECO:0000303"/>
    <property type="project" value="RGD"/>
</dbReference>
<dbReference type="GO" id="GO:0007189">
    <property type="term" value="P:adenylate cyclase-activating G protein-coupled receptor signaling pathway"/>
    <property type="evidence" value="ECO:0000266"/>
    <property type="project" value="RGD"/>
</dbReference>
<dbReference type="GO" id="GO:0150059">
    <property type="term" value="P:amylin receptor 1 signaling pathway"/>
    <property type="evidence" value="ECO:0000266"/>
    <property type="project" value="RGD"/>
</dbReference>
<dbReference type="GO" id="GO:0097647">
    <property type="term" value="P:amylin receptor signaling pathway"/>
    <property type="evidence" value="ECO:0000266"/>
    <property type="project" value="RGD"/>
</dbReference>
<dbReference type="GO" id="GO:0001525">
    <property type="term" value="P:angiogenesis"/>
    <property type="evidence" value="ECO:0000266"/>
    <property type="project" value="RGD"/>
</dbReference>
<dbReference type="GO" id="GO:1990408">
    <property type="term" value="P:calcitonin gene-related peptide receptor signaling pathway"/>
    <property type="evidence" value="ECO:0000266"/>
    <property type="project" value="RGD"/>
</dbReference>
<dbReference type="GO" id="GO:0006816">
    <property type="term" value="P:calcium ion transport"/>
    <property type="evidence" value="ECO:0000266"/>
    <property type="project" value="RGD"/>
</dbReference>
<dbReference type="GO" id="GO:0032870">
    <property type="term" value="P:cellular response to hormone stimulus"/>
    <property type="evidence" value="ECO:0000318"/>
    <property type="project" value="GO_Central"/>
</dbReference>
<dbReference type="GO" id="GO:0007186">
    <property type="term" value="P:G protein-coupled receptor signaling pathway"/>
    <property type="evidence" value="ECO:0000266"/>
    <property type="project" value="RGD"/>
</dbReference>
<dbReference type="GO" id="GO:0006886">
    <property type="term" value="P:intracellular protein transport"/>
    <property type="evidence" value="ECO:0007669"/>
    <property type="project" value="InterPro"/>
</dbReference>
<dbReference type="GO" id="GO:0060050">
    <property type="term" value="P:positive regulation of protein glycosylation"/>
    <property type="evidence" value="ECO:0000266"/>
    <property type="project" value="RGD"/>
</dbReference>
<dbReference type="GO" id="GO:0072659">
    <property type="term" value="P:protein localization to plasma membrane"/>
    <property type="evidence" value="ECO:0000266"/>
    <property type="project" value="RGD"/>
</dbReference>
<dbReference type="GO" id="GO:0015031">
    <property type="term" value="P:protein transport"/>
    <property type="evidence" value="ECO:0000266"/>
    <property type="project" value="RGD"/>
</dbReference>
<dbReference type="GO" id="GO:0031623">
    <property type="term" value="P:receptor internalization"/>
    <property type="evidence" value="ECO:0000314"/>
    <property type="project" value="UniProtKB"/>
</dbReference>
<dbReference type="GO" id="GO:0008277">
    <property type="term" value="P:regulation of G protein-coupled receptor signaling pathway"/>
    <property type="evidence" value="ECO:0007669"/>
    <property type="project" value="InterPro"/>
</dbReference>
<dbReference type="FunFam" id="1.10.150.510:FF:000002">
    <property type="entry name" value="Receptor activity-modifying protein 1"/>
    <property type="match status" value="1"/>
</dbReference>
<dbReference type="Gene3D" id="1.10.150.510">
    <property type="entry name" value="Receptor activity modifying family"/>
    <property type="match status" value="1"/>
</dbReference>
<dbReference type="InterPro" id="IPR006985">
    <property type="entry name" value="RAMP"/>
</dbReference>
<dbReference type="InterPro" id="IPR038126">
    <property type="entry name" value="RAMP_sf"/>
</dbReference>
<dbReference type="PANTHER" id="PTHR14076">
    <property type="entry name" value="RECEPTOR ACTIVITY MODIFYING PROTEIN RAMP"/>
    <property type="match status" value="1"/>
</dbReference>
<dbReference type="PANTHER" id="PTHR14076:SF3">
    <property type="entry name" value="RECEPTOR ACTIVITY-MODIFYING PROTEIN 1"/>
    <property type="match status" value="1"/>
</dbReference>
<dbReference type="Pfam" id="PF04901">
    <property type="entry name" value="RAMP"/>
    <property type="match status" value="1"/>
</dbReference>
<proteinExistence type="evidence at protein level"/>
<accession>Q9JJ74</accession>
<gene>
    <name evidence="5" type="primary">Ramp1</name>
</gene>
<keyword id="KW-1003">Cell membrane</keyword>
<keyword id="KW-1015">Disulfide bond</keyword>
<keyword id="KW-0472">Membrane</keyword>
<keyword id="KW-0675">Receptor</keyword>
<keyword id="KW-1185">Reference proteome</keyword>
<keyword id="KW-0732">Signal</keyword>
<keyword id="KW-0812">Transmembrane</keyword>
<keyword id="KW-1133">Transmembrane helix</keyword>
<keyword id="KW-0813">Transport</keyword>
<comment type="function">
    <text evidence="1 3">Accessory protein that interacts with and modulates the function of G-protein coupled receptors including calcitonin gene-related peptide type 1 receptor (CALCRL) and calcitonin receptor (CALCR) (PubMed:11556887). Required for the transport of CALCRL to the plasma membrane (By similarity). Together with CALCRL, form the receptor complex for the calcitonin gene-related peptides CGRP1/CALCA and CGRP2/CALCB (PubMed:11556887). Together with CALCR, form the AMYR1 receptor complex for amylin/IAPP and CGRP1/CALCA (By similarity).</text>
</comment>
<comment type="subunit">
    <text evidence="1">Heterodimer of CALCRL and RAMP1; the interaction induces allosteric modulation of CALCRL function and CGRP1/CALCA and CGRP2/CALCB ligand specificity. Heterodimer of CALCR and RAMP1; interaction forms the AMYR1 receptor complex for amylin/IAPP and CGRP1/CALCA ligands.</text>
</comment>
<comment type="subcellular location">
    <subcellularLocation>
        <location evidence="1">Cell membrane</location>
        <topology evidence="1">Single-pass type I membrane protein</topology>
    </subcellularLocation>
</comment>
<comment type="similarity">
    <text evidence="4">Belongs to the RAMP family.</text>
</comment>
<organism>
    <name type="scientific">Rattus norvegicus</name>
    <name type="common">Rat</name>
    <dbReference type="NCBI Taxonomy" id="10116"/>
    <lineage>
        <taxon>Eukaryota</taxon>
        <taxon>Metazoa</taxon>
        <taxon>Chordata</taxon>
        <taxon>Craniata</taxon>
        <taxon>Vertebrata</taxon>
        <taxon>Euteleostomi</taxon>
        <taxon>Mammalia</taxon>
        <taxon>Eutheria</taxon>
        <taxon>Euarchontoglires</taxon>
        <taxon>Glires</taxon>
        <taxon>Rodentia</taxon>
        <taxon>Myomorpha</taxon>
        <taxon>Muroidea</taxon>
        <taxon>Muridae</taxon>
        <taxon>Murinae</taxon>
        <taxon>Rattus</taxon>
    </lineage>
</organism>